<feature type="chain" id="PRO_1000165029" description="Glucosamine-6-phosphate deaminase">
    <location>
        <begin position="1"/>
        <end position="235"/>
    </location>
</feature>
<feature type="active site" description="Proton acceptor; for enolization step" evidence="1">
    <location>
        <position position="62"/>
    </location>
</feature>
<feature type="active site" description="For ring-opening step" evidence="1">
    <location>
        <position position="128"/>
    </location>
</feature>
<feature type="active site" description="Proton acceptor; for ring-opening step" evidence="1">
    <location>
        <position position="130"/>
    </location>
</feature>
<feature type="active site" description="For ring-opening step" evidence="1">
    <location>
        <position position="135"/>
    </location>
</feature>
<gene>
    <name evidence="1" type="primary">nagB</name>
    <name type="ordered locus">SPJ_1314</name>
</gene>
<protein>
    <recommendedName>
        <fullName evidence="1">Glucosamine-6-phosphate deaminase</fullName>
        <ecNumber evidence="1">3.5.99.6</ecNumber>
    </recommendedName>
    <alternativeName>
        <fullName evidence="1">GlcN6P deaminase</fullName>
        <shortName evidence="1">GNPDA</shortName>
    </alternativeName>
    <alternativeName>
        <fullName evidence="1">Glucosamine-6-phosphate isomerase</fullName>
    </alternativeName>
</protein>
<organism>
    <name type="scientific">Streptococcus pneumoniae (strain JJA)</name>
    <dbReference type="NCBI Taxonomy" id="488222"/>
    <lineage>
        <taxon>Bacteria</taxon>
        <taxon>Bacillati</taxon>
        <taxon>Bacillota</taxon>
        <taxon>Bacilli</taxon>
        <taxon>Lactobacillales</taxon>
        <taxon>Streptococcaceae</taxon>
        <taxon>Streptococcus</taxon>
    </lineage>
</organism>
<name>NAGB_STRZJ</name>
<sequence>MKVIKVENQVQGGKVAFEILKEKLANGAQTLGLATGSSPLEFYKEIVESDLDFSNLTSVNLDEYVGLDGDNPQSYRYFMQENLFNQKPFKESFLPRGVKDNAEAEVERYNQILADHPVDLQILGIGRNGHIGFNEPGTPFDSQTHLVELDQSTIEANARFFAKIEDVPTQAISMGIKNILDAKSIILFAYGESKAEAIAGTVSGPVTENLPASSLQNHPDVTIIADAEALSLLEK</sequence>
<accession>C1CF03</accession>
<evidence type="ECO:0000255" key="1">
    <source>
        <dbReference type="HAMAP-Rule" id="MF_01241"/>
    </source>
</evidence>
<dbReference type="EC" id="3.5.99.6" evidence="1"/>
<dbReference type="EMBL" id="CP000919">
    <property type="protein sequence ID" value="ACO18109.1"/>
    <property type="molecule type" value="Genomic_DNA"/>
</dbReference>
<dbReference type="RefSeq" id="WP_000864617.1">
    <property type="nucleotide sequence ID" value="NC_012466.1"/>
</dbReference>
<dbReference type="SMR" id="C1CF03"/>
<dbReference type="KEGG" id="sjj:SPJ_1314"/>
<dbReference type="HOGENOM" id="CLU_049611_1_0_9"/>
<dbReference type="UniPathway" id="UPA00629">
    <property type="reaction ID" value="UER00684"/>
</dbReference>
<dbReference type="Proteomes" id="UP000002206">
    <property type="component" value="Chromosome"/>
</dbReference>
<dbReference type="GO" id="GO:0005737">
    <property type="term" value="C:cytoplasm"/>
    <property type="evidence" value="ECO:0007669"/>
    <property type="project" value="TreeGrafter"/>
</dbReference>
<dbReference type="GO" id="GO:0004342">
    <property type="term" value="F:glucosamine-6-phosphate deaminase activity"/>
    <property type="evidence" value="ECO:0007669"/>
    <property type="project" value="UniProtKB-UniRule"/>
</dbReference>
<dbReference type="GO" id="GO:0042802">
    <property type="term" value="F:identical protein binding"/>
    <property type="evidence" value="ECO:0007669"/>
    <property type="project" value="TreeGrafter"/>
</dbReference>
<dbReference type="GO" id="GO:0005975">
    <property type="term" value="P:carbohydrate metabolic process"/>
    <property type="evidence" value="ECO:0007669"/>
    <property type="project" value="InterPro"/>
</dbReference>
<dbReference type="GO" id="GO:0006043">
    <property type="term" value="P:glucosamine catabolic process"/>
    <property type="evidence" value="ECO:0007669"/>
    <property type="project" value="TreeGrafter"/>
</dbReference>
<dbReference type="GO" id="GO:0006046">
    <property type="term" value="P:N-acetylglucosamine catabolic process"/>
    <property type="evidence" value="ECO:0007669"/>
    <property type="project" value="TreeGrafter"/>
</dbReference>
<dbReference type="GO" id="GO:0019262">
    <property type="term" value="P:N-acetylneuraminate catabolic process"/>
    <property type="evidence" value="ECO:0007669"/>
    <property type="project" value="UniProtKB-UniRule"/>
</dbReference>
<dbReference type="CDD" id="cd01399">
    <property type="entry name" value="GlcN6P_deaminase"/>
    <property type="match status" value="1"/>
</dbReference>
<dbReference type="FunFam" id="3.40.50.1360:FF:000003">
    <property type="entry name" value="Glucosamine-6-phosphate deaminase"/>
    <property type="match status" value="1"/>
</dbReference>
<dbReference type="Gene3D" id="3.40.50.1360">
    <property type="match status" value="1"/>
</dbReference>
<dbReference type="HAMAP" id="MF_01241">
    <property type="entry name" value="GlcN6P_deamin"/>
    <property type="match status" value="1"/>
</dbReference>
<dbReference type="InterPro" id="IPR006148">
    <property type="entry name" value="Glc/Gal-6P_isomerase"/>
</dbReference>
<dbReference type="InterPro" id="IPR004547">
    <property type="entry name" value="Glucosamine6P_isomerase"/>
</dbReference>
<dbReference type="InterPro" id="IPR018321">
    <property type="entry name" value="Glucosamine6P_isomerase_CS"/>
</dbReference>
<dbReference type="InterPro" id="IPR037171">
    <property type="entry name" value="NagB/RpiA_transferase-like"/>
</dbReference>
<dbReference type="PANTHER" id="PTHR11280">
    <property type="entry name" value="GLUCOSAMINE-6-PHOSPHATE ISOMERASE"/>
    <property type="match status" value="1"/>
</dbReference>
<dbReference type="PANTHER" id="PTHR11280:SF5">
    <property type="entry name" value="GLUCOSAMINE-6-PHOSPHATE ISOMERASE"/>
    <property type="match status" value="1"/>
</dbReference>
<dbReference type="Pfam" id="PF01182">
    <property type="entry name" value="Glucosamine_iso"/>
    <property type="match status" value="1"/>
</dbReference>
<dbReference type="SUPFAM" id="SSF100950">
    <property type="entry name" value="NagB/RpiA/CoA transferase-like"/>
    <property type="match status" value="1"/>
</dbReference>
<dbReference type="PROSITE" id="PS01161">
    <property type="entry name" value="GLC_GALNAC_ISOMERASE"/>
    <property type="match status" value="1"/>
</dbReference>
<proteinExistence type="inferred from homology"/>
<reference key="1">
    <citation type="journal article" date="2010" name="Genome Biol.">
        <title>Structure and dynamics of the pan-genome of Streptococcus pneumoniae and closely related species.</title>
        <authorList>
            <person name="Donati C."/>
            <person name="Hiller N.L."/>
            <person name="Tettelin H."/>
            <person name="Muzzi A."/>
            <person name="Croucher N.J."/>
            <person name="Angiuoli S.V."/>
            <person name="Oggioni M."/>
            <person name="Dunning Hotopp J.C."/>
            <person name="Hu F.Z."/>
            <person name="Riley D.R."/>
            <person name="Covacci A."/>
            <person name="Mitchell T.J."/>
            <person name="Bentley S.D."/>
            <person name="Kilian M."/>
            <person name="Ehrlich G.D."/>
            <person name="Rappuoli R."/>
            <person name="Moxon E.R."/>
            <person name="Masignani V."/>
        </authorList>
    </citation>
    <scope>NUCLEOTIDE SEQUENCE [LARGE SCALE GENOMIC DNA]</scope>
    <source>
        <strain>JJA</strain>
    </source>
</reference>
<keyword id="KW-0119">Carbohydrate metabolism</keyword>
<keyword id="KW-0378">Hydrolase</keyword>
<comment type="function">
    <text evidence="1">Catalyzes the reversible isomerization-deamination of glucosamine 6-phosphate (GlcN6P) to form fructose 6-phosphate (Fru6P) and ammonium ion.</text>
</comment>
<comment type="catalytic activity">
    <reaction evidence="1">
        <text>alpha-D-glucosamine 6-phosphate + H2O = beta-D-fructose 6-phosphate + NH4(+)</text>
        <dbReference type="Rhea" id="RHEA:12172"/>
        <dbReference type="ChEBI" id="CHEBI:15377"/>
        <dbReference type="ChEBI" id="CHEBI:28938"/>
        <dbReference type="ChEBI" id="CHEBI:57634"/>
        <dbReference type="ChEBI" id="CHEBI:75989"/>
        <dbReference type="EC" id="3.5.99.6"/>
    </reaction>
</comment>
<comment type="pathway">
    <text evidence="1">Amino-sugar metabolism; N-acetylneuraminate degradation; D-fructose 6-phosphate from N-acetylneuraminate: step 5/5.</text>
</comment>
<comment type="similarity">
    <text evidence="1">Belongs to the glucosamine/galactosamine-6-phosphate isomerase family. NagB subfamily.</text>
</comment>